<keyword id="KW-0066">ATP synthesis</keyword>
<keyword id="KW-1003">Cell membrane</keyword>
<keyword id="KW-0139">CF(1)</keyword>
<keyword id="KW-0375">Hydrogen ion transport</keyword>
<keyword id="KW-0406">Ion transport</keyword>
<keyword id="KW-0472">Membrane</keyword>
<keyword id="KW-0813">Transport</keyword>
<reference key="1">
    <citation type="journal article" date="2009" name="PLoS Pathog.">
        <title>Genomic evidence for the evolution of Streptococcus equi: host restriction, increased virulence, and genetic exchange with human pathogens.</title>
        <authorList>
            <person name="Holden M.T.G."/>
            <person name="Heather Z."/>
            <person name="Paillot R."/>
            <person name="Steward K.F."/>
            <person name="Webb K."/>
            <person name="Ainslie F."/>
            <person name="Jourdan T."/>
            <person name="Bason N.C."/>
            <person name="Holroyd N.E."/>
            <person name="Mungall K."/>
            <person name="Quail M.A."/>
            <person name="Sanders M."/>
            <person name="Simmonds M."/>
            <person name="Willey D."/>
            <person name="Brooks K."/>
            <person name="Aanensen D.M."/>
            <person name="Spratt B.G."/>
            <person name="Jolley K.A."/>
            <person name="Maiden M.C.J."/>
            <person name="Kehoe M."/>
            <person name="Chanter N."/>
            <person name="Bentley S.D."/>
            <person name="Robinson C."/>
            <person name="Maskell D.J."/>
            <person name="Parkhill J."/>
            <person name="Waller A.S."/>
        </authorList>
    </citation>
    <scope>NUCLEOTIDE SEQUENCE [LARGE SCALE GENOMIC DNA]</scope>
    <source>
        <strain>H70</strain>
    </source>
</reference>
<sequence length="178" mass="20146">MTKKEQALIEQYAKSLVQVCQERDTLEALQADVLAILEVFKATNLAKTLSSLAVPRAKRLELVRQLQGDNIVYLNNLLEVMLQNEREAYLYQVLLRVLSELASVSNQYDVTVTSAVPLSEEQKQRVRTVVSKRLAVKTGRLIEKVDPSLIGGFMISVNNKVIDTSIRRQLQAFKMNLK</sequence>
<protein>
    <recommendedName>
        <fullName evidence="1">ATP synthase subunit delta</fullName>
    </recommendedName>
    <alternativeName>
        <fullName evidence="1">ATP synthase F(1) sector subunit delta</fullName>
    </alternativeName>
    <alternativeName>
        <fullName evidence="1">F-type ATPase subunit delta</fullName>
        <shortName evidence="1">F-ATPase subunit delta</shortName>
    </alternativeName>
</protein>
<gene>
    <name evidence="1" type="primary">atpH</name>
    <name type="ordered locus">SZO_11660</name>
</gene>
<name>ATPD_STRS7</name>
<comment type="function">
    <text evidence="1">F(1)F(0) ATP synthase produces ATP from ADP in the presence of a proton or sodium gradient. F-type ATPases consist of two structural domains, F(1) containing the extramembraneous catalytic core and F(0) containing the membrane proton channel, linked together by a central stalk and a peripheral stalk. During catalysis, ATP synthesis in the catalytic domain of F(1) is coupled via a rotary mechanism of the central stalk subunits to proton translocation.</text>
</comment>
<comment type="function">
    <text evidence="1">This protein is part of the stalk that links CF(0) to CF(1). It either transmits conformational changes from CF(0) to CF(1) or is implicated in proton conduction.</text>
</comment>
<comment type="subunit">
    <text evidence="1">F-type ATPases have 2 components, F(1) - the catalytic core - and F(0) - the membrane proton channel. F(1) has five subunits: alpha(3), beta(3), gamma(1), delta(1), epsilon(1). F(0) has three main subunits: a(1), b(2) and c(10-14). The alpha and beta chains form an alternating ring which encloses part of the gamma chain. F(1) is attached to F(0) by a central stalk formed by the gamma and epsilon chains, while a peripheral stalk is formed by the delta and b chains.</text>
</comment>
<comment type="subcellular location">
    <subcellularLocation>
        <location evidence="1">Cell membrane</location>
        <topology evidence="1">Peripheral membrane protein</topology>
    </subcellularLocation>
</comment>
<comment type="similarity">
    <text evidence="1">Belongs to the ATPase delta chain family.</text>
</comment>
<evidence type="ECO:0000255" key="1">
    <source>
        <dbReference type="HAMAP-Rule" id="MF_01416"/>
    </source>
</evidence>
<accession>C0MH20</accession>
<feature type="chain" id="PRO_1000215243" description="ATP synthase subunit delta">
    <location>
        <begin position="1"/>
        <end position="178"/>
    </location>
</feature>
<dbReference type="EMBL" id="FM204884">
    <property type="protein sequence ID" value="CAW99607.1"/>
    <property type="molecule type" value="Genomic_DNA"/>
</dbReference>
<dbReference type="SMR" id="C0MH20"/>
<dbReference type="KEGG" id="seq:SZO_11660"/>
<dbReference type="eggNOG" id="COG0712">
    <property type="taxonomic scope" value="Bacteria"/>
</dbReference>
<dbReference type="HOGENOM" id="CLU_085114_1_2_9"/>
<dbReference type="Proteomes" id="UP000001368">
    <property type="component" value="Chromosome"/>
</dbReference>
<dbReference type="GO" id="GO:0005886">
    <property type="term" value="C:plasma membrane"/>
    <property type="evidence" value="ECO:0007669"/>
    <property type="project" value="UniProtKB-SubCell"/>
</dbReference>
<dbReference type="GO" id="GO:0045259">
    <property type="term" value="C:proton-transporting ATP synthase complex"/>
    <property type="evidence" value="ECO:0007669"/>
    <property type="project" value="UniProtKB-KW"/>
</dbReference>
<dbReference type="GO" id="GO:0046933">
    <property type="term" value="F:proton-transporting ATP synthase activity, rotational mechanism"/>
    <property type="evidence" value="ECO:0007669"/>
    <property type="project" value="UniProtKB-UniRule"/>
</dbReference>
<dbReference type="Gene3D" id="1.10.520.20">
    <property type="entry name" value="N-terminal domain of the delta subunit of the F1F0-ATP synthase"/>
    <property type="match status" value="1"/>
</dbReference>
<dbReference type="HAMAP" id="MF_01416">
    <property type="entry name" value="ATP_synth_delta_bact"/>
    <property type="match status" value="1"/>
</dbReference>
<dbReference type="InterPro" id="IPR026015">
    <property type="entry name" value="ATP_synth_OSCP/delta_N_sf"/>
</dbReference>
<dbReference type="InterPro" id="IPR000711">
    <property type="entry name" value="ATPase_OSCP/dsu"/>
</dbReference>
<dbReference type="NCBIfam" id="TIGR01145">
    <property type="entry name" value="ATP_synt_delta"/>
    <property type="match status" value="1"/>
</dbReference>
<dbReference type="NCBIfam" id="NF004401">
    <property type="entry name" value="PRK05758.2-1"/>
    <property type="match status" value="1"/>
</dbReference>
<dbReference type="PANTHER" id="PTHR11910">
    <property type="entry name" value="ATP SYNTHASE DELTA CHAIN"/>
    <property type="match status" value="1"/>
</dbReference>
<dbReference type="Pfam" id="PF00213">
    <property type="entry name" value="OSCP"/>
    <property type="match status" value="1"/>
</dbReference>
<dbReference type="PRINTS" id="PR00125">
    <property type="entry name" value="ATPASEDELTA"/>
</dbReference>
<dbReference type="SUPFAM" id="SSF47928">
    <property type="entry name" value="N-terminal domain of the delta subunit of the F1F0-ATP synthase"/>
    <property type="match status" value="1"/>
</dbReference>
<proteinExistence type="inferred from homology"/>
<organism>
    <name type="scientific">Streptococcus equi subsp. zooepidemicus (strain H70)</name>
    <dbReference type="NCBI Taxonomy" id="553483"/>
    <lineage>
        <taxon>Bacteria</taxon>
        <taxon>Bacillati</taxon>
        <taxon>Bacillota</taxon>
        <taxon>Bacilli</taxon>
        <taxon>Lactobacillales</taxon>
        <taxon>Streptococcaceae</taxon>
        <taxon>Streptococcus</taxon>
    </lineage>
</organism>